<evidence type="ECO:0000255" key="1">
    <source>
        <dbReference type="PROSITE-ProRule" id="PRU00448"/>
    </source>
</evidence>
<evidence type="ECO:0000305" key="2"/>
<feature type="chain" id="PRO_0000073672" description="Polcalcin Cyn d 7">
    <location>
        <begin position="1"/>
        <end position="80"/>
    </location>
</feature>
<feature type="domain" description="EF-hand 1" evidence="1">
    <location>
        <begin position="2"/>
        <end position="37"/>
    </location>
</feature>
<feature type="domain" description="EF-hand 2" evidence="1">
    <location>
        <begin position="40"/>
        <end position="72"/>
    </location>
</feature>
<feature type="binding site" evidence="1">
    <location>
        <position position="15"/>
    </location>
    <ligand>
        <name>Ca(2+)</name>
        <dbReference type="ChEBI" id="CHEBI:29108"/>
        <label>1</label>
    </ligand>
</feature>
<feature type="binding site" evidence="1">
    <location>
        <position position="17"/>
    </location>
    <ligand>
        <name>Ca(2+)</name>
        <dbReference type="ChEBI" id="CHEBI:29108"/>
        <label>1</label>
    </ligand>
</feature>
<feature type="binding site" evidence="1">
    <location>
        <position position="19"/>
    </location>
    <ligand>
        <name>Ca(2+)</name>
        <dbReference type="ChEBI" id="CHEBI:29108"/>
        <label>1</label>
    </ligand>
</feature>
<feature type="binding site" evidence="1">
    <location>
        <position position="21"/>
    </location>
    <ligand>
        <name>Ca(2+)</name>
        <dbReference type="ChEBI" id="CHEBI:29108"/>
        <label>1</label>
    </ligand>
</feature>
<feature type="binding site" evidence="1">
    <location>
        <position position="26"/>
    </location>
    <ligand>
        <name>Ca(2+)</name>
        <dbReference type="ChEBI" id="CHEBI:29108"/>
        <label>1</label>
    </ligand>
</feature>
<feature type="binding site" evidence="1">
    <location>
        <position position="50"/>
    </location>
    <ligand>
        <name>Ca(2+)</name>
        <dbReference type="ChEBI" id="CHEBI:29108"/>
        <label>2</label>
    </ligand>
</feature>
<feature type="binding site" evidence="1">
    <location>
        <position position="52"/>
    </location>
    <ligand>
        <name>Ca(2+)</name>
        <dbReference type="ChEBI" id="CHEBI:29108"/>
        <label>2</label>
    </ligand>
</feature>
<feature type="binding site" evidence="1">
    <location>
        <position position="54"/>
    </location>
    <ligand>
        <name>Ca(2+)</name>
        <dbReference type="ChEBI" id="CHEBI:29108"/>
        <label>2</label>
    </ligand>
</feature>
<feature type="binding site" evidence="1">
    <location>
        <position position="61"/>
    </location>
    <ligand>
        <name>Ca(2+)</name>
        <dbReference type="ChEBI" id="CHEBI:29108"/>
        <label>2</label>
    </ligand>
</feature>
<comment type="allergen">
    <text>Causes an allergic reaction in human. Binds to IgE.</text>
</comment>
<comment type="sequence caution" evidence="2">
    <conflict type="erroneous initiation">
        <sequence resource="EMBL-CDS" id="AAC49648"/>
    </conflict>
</comment>
<comment type="sequence caution" evidence="2">
    <conflict type="erroneous initiation">
        <sequence resource="EMBL-CDS" id="CAA62634"/>
    </conflict>
</comment>
<organism>
    <name type="scientific">Cynodon dactylon</name>
    <name type="common">Bermuda grass</name>
    <name type="synonym">Panicum dactylon</name>
    <dbReference type="NCBI Taxonomy" id="28909"/>
    <lineage>
        <taxon>Eukaryota</taxon>
        <taxon>Viridiplantae</taxon>
        <taxon>Streptophyta</taxon>
        <taxon>Embryophyta</taxon>
        <taxon>Tracheophyta</taxon>
        <taxon>Spermatophyta</taxon>
        <taxon>Magnoliopsida</taxon>
        <taxon>Liliopsida</taxon>
        <taxon>Poales</taxon>
        <taxon>Poaceae</taxon>
        <taxon>PACMAD clade</taxon>
        <taxon>Chloridoideae</taxon>
        <taxon>Cynodonteae</taxon>
        <taxon>Eleusininae</taxon>
        <taxon>Cynodon</taxon>
    </lineage>
</organism>
<dbReference type="EMBL" id="X91256">
    <property type="protein sequence ID" value="CAA62634.1"/>
    <property type="status" value="ALT_INIT"/>
    <property type="molecule type" value="mRNA"/>
</dbReference>
<dbReference type="EMBL" id="U35683">
    <property type="protein sequence ID" value="AAC49648.1"/>
    <property type="status" value="ALT_INIT"/>
    <property type="molecule type" value="Genomic_DNA"/>
</dbReference>
<dbReference type="EMBL" id="U75585">
    <property type="protein sequence ID" value="AAD00247.1"/>
    <property type="molecule type" value="mRNA"/>
</dbReference>
<dbReference type="SMR" id="P94092"/>
<dbReference type="Allergome" id="280">
    <property type="allergen name" value="Cyn d 7"/>
</dbReference>
<dbReference type="Allergome" id="3238">
    <property type="allergen name" value="Cyn d 7.0101"/>
</dbReference>
<dbReference type="GO" id="GO:0005509">
    <property type="term" value="F:calcium ion binding"/>
    <property type="evidence" value="ECO:0007669"/>
    <property type="project" value="InterPro"/>
</dbReference>
<dbReference type="CDD" id="cd00051">
    <property type="entry name" value="EFh"/>
    <property type="match status" value="1"/>
</dbReference>
<dbReference type="FunFam" id="1.10.238.10:FF:000198">
    <property type="entry name" value="Polcalcin Phl p 7"/>
    <property type="match status" value="1"/>
</dbReference>
<dbReference type="Gene3D" id="1.10.238.10">
    <property type="entry name" value="EF-hand"/>
    <property type="match status" value="1"/>
</dbReference>
<dbReference type="InterPro" id="IPR011992">
    <property type="entry name" value="EF-hand-dom_pair"/>
</dbReference>
<dbReference type="InterPro" id="IPR018247">
    <property type="entry name" value="EF_Hand_1_Ca_BS"/>
</dbReference>
<dbReference type="InterPro" id="IPR002048">
    <property type="entry name" value="EF_hand_dom"/>
</dbReference>
<dbReference type="InterPro" id="IPR039647">
    <property type="entry name" value="EF_hand_pair_protein_CML-like"/>
</dbReference>
<dbReference type="PANTHER" id="PTHR10891">
    <property type="entry name" value="EF-HAND CALCIUM-BINDING DOMAIN CONTAINING PROTEIN"/>
    <property type="match status" value="1"/>
</dbReference>
<dbReference type="Pfam" id="PF13499">
    <property type="entry name" value="EF-hand_7"/>
    <property type="match status" value="1"/>
</dbReference>
<dbReference type="SMART" id="SM00054">
    <property type="entry name" value="EFh"/>
    <property type="match status" value="2"/>
</dbReference>
<dbReference type="SUPFAM" id="SSF47473">
    <property type="entry name" value="EF-hand"/>
    <property type="match status" value="1"/>
</dbReference>
<dbReference type="PROSITE" id="PS00018">
    <property type="entry name" value="EF_HAND_1"/>
    <property type="match status" value="2"/>
</dbReference>
<dbReference type="PROSITE" id="PS50222">
    <property type="entry name" value="EF_HAND_2"/>
    <property type="match status" value="2"/>
</dbReference>
<name>POLC7_CYNDA</name>
<sequence length="80" mass="8801">MADTGDMEHIFKRFDTNGDGKISLAELTDALRTLGSTSADEVQRMMAEIDTDGDGFIDFDEFISFCNANPGLMKDVAKVF</sequence>
<keyword id="KW-0020">Allergen</keyword>
<keyword id="KW-0106">Calcium</keyword>
<keyword id="KW-0479">Metal-binding</keyword>
<keyword id="KW-0677">Repeat</keyword>
<accession>P94092</accession>
<accession>Q9SAR4</accession>
<proteinExistence type="evidence at protein level"/>
<reference key="1">
    <citation type="journal article" date="1997" name="FEBS Lett.">
        <title>Molecular cloning and immunological characterisation of Cyn d 7, a novel calcium-binding allergen from Bermuda grass pollen.</title>
        <authorList>
            <person name="Suphioglu C."/>
            <person name="Ferreira F."/>
            <person name="Knox R.B."/>
        </authorList>
    </citation>
    <scope>NUCLEOTIDE SEQUENCE [GENOMIC DNA / MRNA]</scope>
    <source>
        <tissue>Pollen</tissue>
    </source>
</reference>
<reference key="2">
    <citation type="journal article" date="1997" name="Int. Arch. Allergy Immunol.">
        <title>Identification of a Ca2+ binding protein as a new Bermuda grass pollen allergen Cyn d 7: IgE cross-reactivity with oilseed rape pollen allergen Bra r 1.</title>
        <authorList>
            <person name="Smith P.M."/>
            <person name="Xu H."/>
            <person name="Swoboda I."/>
            <person name="Singh M.B."/>
        </authorList>
    </citation>
    <scope>NUCLEOTIDE SEQUENCE</scope>
    <source>
        <tissue>Pollen</tissue>
    </source>
</reference>
<protein>
    <recommendedName>
        <fullName>Polcalcin Cyn d 7</fullName>
    </recommendedName>
    <alternativeName>
        <fullName>Calcium-binding pollen allergen Cyn d 7</fullName>
    </alternativeName>
    <alternativeName>
        <fullName>Calcium-binding protein B1</fullName>
    </alternativeName>
    <allergenName>Cyn d 7</allergenName>
</protein>